<proteinExistence type="inferred from homology"/>
<accession>A7I1A0</accession>
<feature type="chain" id="PRO_0000381283" description="Biotin synthase">
    <location>
        <begin position="1"/>
        <end position="324"/>
    </location>
</feature>
<feature type="domain" description="Radical SAM core" evidence="2">
    <location>
        <begin position="43"/>
        <end position="273"/>
    </location>
</feature>
<feature type="binding site" evidence="1">
    <location>
        <position position="61"/>
    </location>
    <ligand>
        <name>[4Fe-4S] cluster</name>
        <dbReference type="ChEBI" id="CHEBI:49883"/>
        <note>4Fe-4S-S-AdoMet</note>
    </ligand>
</feature>
<feature type="binding site" evidence="1">
    <location>
        <position position="65"/>
    </location>
    <ligand>
        <name>[4Fe-4S] cluster</name>
        <dbReference type="ChEBI" id="CHEBI:49883"/>
        <note>4Fe-4S-S-AdoMet</note>
    </ligand>
</feature>
<feature type="binding site" evidence="1">
    <location>
        <position position="68"/>
    </location>
    <ligand>
        <name>[4Fe-4S] cluster</name>
        <dbReference type="ChEBI" id="CHEBI:49883"/>
        <note>4Fe-4S-S-AdoMet</note>
    </ligand>
</feature>
<feature type="binding site" evidence="1">
    <location>
        <position position="105"/>
    </location>
    <ligand>
        <name>[2Fe-2S] cluster</name>
        <dbReference type="ChEBI" id="CHEBI:190135"/>
    </ligand>
</feature>
<feature type="binding site" evidence="1">
    <location>
        <position position="138"/>
    </location>
    <ligand>
        <name>[2Fe-2S] cluster</name>
        <dbReference type="ChEBI" id="CHEBI:190135"/>
    </ligand>
</feature>
<feature type="binding site" evidence="1">
    <location>
        <position position="198"/>
    </location>
    <ligand>
        <name>[2Fe-2S] cluster</name>
        <dbReference type="ChEBI" id="CHEBI:190135"/>
    </ligand>
</feature>
<feature type="binding site" evidence="1">
    <location>
        <position position="268"/>
    </location>
    <ligand>
        <name>[2Fe-2S] cluster</name>
        <dbReference type="ChEBI" id="CHEBI:190135"/>
    </ligand>
</feature>
<dbReference type="EC" id="2.8.1.6" evidence="1"/>
<dbReference type="EMBL" id="CP000776">
    <property type="protein sequence ID" value="ABS52409.1"/>
    <property type="molecule type" value="Genomic_DNA"/>
</dbReference>
<dbReference type="RefSeq" id="WP_012108578.1">
    <property type="nucleotide sequence ID" value="NC_009714.1"/>
</dbReference>
<dbReference type="SMR" id="A7I1A0"/>
<dbReference type="STRING" id="360107.CHAB381_0711"/>
<dbReference type="KEGG" id="cha:CHAB381_0711"/>
<dbReference type="eggNOG" id="COG0502">
    <property type="taxonomic scope" value="Bacteria"/>
</dbReference>
<dbReference type="HOGENOM" id="CLU_033172_2_1_7"/>
<dbReference type="OrthoDB" id="9786826at2"/>
<dbReference type="UniPathway" id="UPA00078">
    <property type="reaction ID" value="UER00162"/>
</dbReference>
<dbReference type="Proteomes" id="UP000002407">
    <property type="component" value="Chromosome"/>
</dbReference>
<dbReference type="GO" id="GO:0051537">
    <property type="term" value="F:2 iron, 2 sulfur cluster binding"/>
    <property type="evidence" value="ECO:0007669"/>
    <property type="project" value="UniProtKB-KW"/>
</dbReference>
<dbReference type="GO" id="GO:0051539">
    <property type="term" value="F:4 iron, 4 sulfur cluster binding"/>
    <property type="evidence" value="ECO:0007669"/>
    <property type="project" value="UniProtKB-KW"/>
</dbReference>
<dbReference type="GO" id="GO:0004076">
    <property type="term" value="F:biotin synthase activity"/>
    <property type="evidence" value="ECO:0007669"/>
    <property type="project" value="UniProtKB-UniRule"/>
</dbReference>
<dbReference type="GO" id="GO:0005506">
    <property type="term" value="F:iron ion binding"/>
    <property type="evidence" value="ECO:0007669"/>
    <property type="project" value="UniProtKB-UniRule"/>
</dbReference>
<dbReference type="GO" id="GO:0009102">
    <property type="term" value="P:biotin biosynthetic process"/>
    <property type="evidence" value="ECO:0007669"/>
    <property type="project" value="UniProtKB-UniRule"/>
</dbReference>
<dbReference type="CDD" id="cd01335">
    <property type="entry name" value="Radical_SAM"/>
    <property type="match status" value="1"/>
</dbReference>
<dbReference type="FunFam" id="3.20.20.70:FF:000026">
    <property type="entry name" value="Biotin synthase"/>
    <property type="match status" value="1"/>
</dbReference>
<dbReference type="Gene3D" id="3.20.20.70">
    <property type="entry name" value="Aldolase class I"/>
    <property type="match status" value="1"/>
</dbReference>
<dbReference type="HAMAP" id="MF_01694">
    <property type="entry name" value="BioB"/>
    <property type="match status" value="1"/>
</dbReference>
<dbReference type="InterPro" id="IPR013785">
    <property type="entry name" value="Aldolase_TIM"/>
</dbReference>
<dbReference type="InterPro" id="IPR010722">
    <property type="entry name" value="BATS_dom"/>
</dbReference>
<dbReference type="InterPro" id="IPR002684">
    <property type="entry name" value="Biotin_synth/BioAB"/>
</dbReference>
<dbReference type="InterPro" id="IPR024177">
    <property type="entry name" value="Biotin_synthase"/>
</dbReference>
<dbReference type="InterPro" id="IPR006638">
    <property type="entry name" value="Elp3/MiaA/NifB-like_rSAM"/>
</dbReference>
<dbReference type="InterPro" id="IPR007197">
    <property type="entry name" value="rSAM"/>
</dbReference>
<dbReference type="NCBIfam" id="TIGR00433">
    <property type="entry name" value="bioB"/>
    <property type="match status" value="1"/>
</dbReference>
<dbReference type="PANTHER" id="PTHR22976">
    <property type="entry name" value="BIOTIN SYNTHASE"/>
    <property type="match status" value="1"/>
</dbReference>
<dbReference type="PANTHER" id="PTHR22976:SF2">
    <property type="entry name" value="BIOTIN SYNTHASE, MITOCHONDRIAL"/>
    <property type="match status" value="1"/>
</dbReference>
<dbReference type="Pfam" id="PF06968">
    <property type="entry name" value="BATS"/>
    <property type="match status" value="1"/>
</dbReference>
<dbReference type="Pfam" id="PF04055">
    <property type="entry name" value="Radical_SAM"/>
    <property type="match status" value="1"/>
</dbReference>
<dbReference type="PIRSF" id="PIRSF001619">
    <property type="entry name" value="Biotin_synth"/>
    <property type="match status" value="1"/>
</dbReference>
<dbReference type="SFLD" id="SFLDG01060">
    <property type="entry name" value="BATS_domain_containing"/>
    <property type="match status" value="1"/>
</dbReference>
<dbReference type="SFLD" id="SFLDG01278">
    <property type="entry name" value="biotin_synthase_like"/>
    <property type="match status" value="1"/>
</dbReference>
<dbReference type="SMART" id="SM00876">
    <property type="entry name" value="BATS"/>
    <property type="match status" value="1"/>
</dbReference>
<dbReference type="SMART" id="SM00729">
    <property type="entry name" value="Elp3"/>
    <property type="match status" value="1"/>
</dbReference>
<dbReference type="SUPFAM" id="SSF102114">
    <property type="entry name" value="Radical SAM enzymes"/>
    <property type="match status" value="1"/>
</dbReference>
<dbReference type="PROSITE" id="PS51918">
    <property type="entry name" value="RADICAL_SAM"/>
    <property type="match status" value="1"/>
</dbReference>
<evidence type="ECO:0000255" key="1">
    <source>
        <dbReference type="HAMAP-Rule" id="MF_01694"/>
    </source>
</evidence>
<evidence type="ECO:0000255" key="2">
    <source>
        <dbReference type="PROSITE-ProRule" id="PRU01266"/>
    </source>
</evidence>
<protein>
    <recommendedName>
        <fullName evidence="1">Biotin synthase</fullName>
        <ecNumber evidence="1">2.8.1.6</ecNumber>
    </recommendedName>
</protein>
<sequence length="324" mass="35899">MDLQKIKNQILDGRNLCIEDAYELENAPLNELLEAANEVRAKFCGNYFNFCSIINVKSGKCSENCKYCAQSAHFDTKCEIYDILPFEKIMPLAKLNDDAGVARFSLVASGKGLHKKDDLQKVIEIYKKLKSHTKFHLCASFGIVSKEILAELKKSGVKTYHHNLETSRKFFPKICTTHTYDDRINTIKSALCVGLDVCSGGIFGLGESLKDRIDMAYELKNLKVSSVPINILTPIKGTPLENSAPLCVDEILRSIAIFRLILPHVFLRLAGGRNNLKNSVKTALNGGINSAITGDFLTTCGDVAQSDKNLVSECGFVYKKSFDV</sequence>
<comment type="function">
    <text evidence="1">Catalyzes the conversion of dethiobiotin (DTB) to biotin by the insertion of a sulfur atom into dethiobiotin via a radical-based mechanism.</text>
</comment>
<comment type="catalytic activity">
    <reaction evidence="1">
        <text>(4R,5S)-dethiobiotin + (sulfur carrier)-SH + 2 reduced [2Fe-2S]-[ferredoxin] + 2 S-adenosyl-L-methionine = (sulfur carrier)-H + biotin + 2 5'-deoxyadenosine + 2 L-methionine + 2 oxidized [2Fe-2S]-[ferredoxin]</text>
        <dbReference type="Rhea" id="RHEA:22060"/>
        <dbReference type="Rhea" id="RHEA-COMP:10000"/>
        <dbReference type="Rhea" id="RHEA-COMP:10001"/>
        <dbReference type="Rhea" id="RHEA-COMP:14737"/>
        <dbReference type="Rhea" id="RHEA-COMP:14739"/>
        <dbReference type="ChEBI" id="CHEBI:17319"/>
        <dbReference type="ChEBI" id="CHEBI:29917"/>
        <dbReference type="ChEBI" id="CHEBI:33737"/>
        <dbReference type="ChEBI" id="CHEBI:33738"/>
        <dbReference type="ChEBI" id="CHEBI:57586"/>
        <dbReference type="ChEBI" id="CHEBI:57844"/>
        <dbReference type="ChEBI" id="CHEBI:59789"/>
        <dbReference type="ChEBI" id="CHEBI:64428"/>
        <dbReference type="ChEBI" id="CHEBI:149473"/>
        <dbReference type="EC" id="2.8.1.6"/>
    </reaction>
</comment>
<comment type="cofactor">
    <cofactor evidence="1">
        <name>[4Fe-4S] cluster</name>
        <dbReference type="ChEBI" id="CHEBI:49883"/>
    </cofactor>
    <text evidence="1">Binds 1 [4Fe-4S] cluster. The cluster is coordinated with 3 cysteines and an exchangeable S-adenosyl-L-methionine.</text>
</comment>
<comment type="cofactor">
    <cofactor evidence="1">
        <name>[2Fe-2S] cluster</name>
        <dbReference type="ChEBI" id="CHEBI:190135"/>
    </cofactor>
    <text evidence="1">Binds 1 [2Fe-2S] cluster. The cluster is coordinated with 3 cysteines and 1 arginine.</text>
</comment>
<comment type="pathway">
    <text evidence="1">Cofactor biosynthesis; biotin biosynthesis; biotin from 7,8-diaminononanoate: step 2/2.</text>
</comment>
<comment type="subunit">
    <text evidence="1">Homodimer.</text>
</comment>
<comment type="similarity">
    <text evidence="1">Belongs to the radical SAM superfamily. Biotin synthase family.</text>
</comment>
<reference key="1">
    <citation type="submission" date="2007-07" db="EMBL/GenBank/DDBJ databases">
        <title>Complete genome sequence of Campylobacter hominis ATCC BAA-381, a commensal isolated from the human gastrointestinal tract.</title>
        <authorList>
            <person name="Fouts D.E."/>
            <person name="Mongodin E.F."/>
            <person name="Puiu D."/>
            <person name="Sebastian Y."/>
            <person name="Miller W.G."/>
            <person name="Mandrell R.E."/>
            <person name="Nelson K.E."/>
        </authorList>
    </citation>
    <scope>NUCLEOTIDE SEQUENCE [LARGE SCALE GENOMIC DNA]</scope>
    <source>
        <strain>ATCC BAA-381 / DSM 21671 / CCUG 45161 / LMG 19568 / NCTC 13146 / CH001A</strain>
    </source>
</reference>
<name>BIOB_CAMHC</name>
<keyword id="KW-0001">2Fe-2S</keyword>
<keyword id="KW-0004">4Fe-4S</keyword>
<keyword id="KW-0093">Biotin biosynthesis</keyword>
<keyword id="KW-0408">Iron</keyword>
<keyword id="KW-0411">Iron-sulfur</keyword>
<keyword id="KW-0479">Metal-binding</keyword>
<keyword id="KW-1185">Reference proteome</keyword>
<keyword id="KW-0949">S-adenosyl-L-methionine</keyword>
<keyword id="KW-0808">Transferase</keyword>
<gene>
    <name evidence="1" type="primary">bioB</name>
    <name type="ordered locus">CHAB381_0711</name>
</gene>
<organism>
    <name type="scientific">Campylobacter hominis (strain ATCC BAA-381 / DSM 21671 / CCUG 45161 / LMG 19568 / NCTC 13146 / CH001A)</name>
    <dbReference type="NCBI Taxonomy" id="360107"/>
    <lineage>
        <taxon>Bacteria</taxon>
        <taxon>Pseudomonadati</taxon>
        <taxon>Campylobacterota</taxon>
        <taxon>Epsilonproteobacteria</taxon>
        <taxon>Campylobacterales</taxon>
        <taxon>Campylobacteraceae</taxon>
        <taxon>Campylobacter</taxon>
    </lineage>
</organism>